<keyword id="KW-0963">Cytoplasm</keyword>
<keyword id="KW-0479">Metal-binding</keyword>
<keyword id="KW-1185">Reference proteome</keyword>
<keyword id="KW-0862">Zinc</keyword>
<keyword id="KW-0863">Zinc-finger</keyword>
<proteinExistence type="inferred from homology"/>
<sequence length="105" mass="10860">MGPQQDRSAAKPYANGSTAAAAAAGRKENNKVVRYRECQRNHAASIGGHAVDGCREFMASGAEGTAAALLCAACGCHRSFHRREVEAAAAECDCSSDTSSGTGRR</sequence>
<dbReference type="EMBL" id="DP000010">
    <property type="protein sequence ID" value="ABA91287.1"/>
    <property type="molecule type" value="Genomic_DNA"/>
</dbReference>
<dbReference type="EMBL" id="AP008217">
    <property type="protein sequence ID" value="BAF27479.1"/>
    <property type="molecule type" value="Genomic_DNA"/>
</dbReference>
<dbReference type="EMBL" id="AP014967">
    <property type="protein sequence ID" value="BAT12494.1"/>
    <property type="molecule type" value="Genomic_DNA"/>
</dbReference>
<dbReference type="EMBL" id="CM000148">
    <property type="protein sequence ID" value="EAZ17273.1"/>
    <property type="molecule type" value="Genomic_DNA"/>
</dbReference>
<dbReference type="EMBL" id="AK063715">
    <property type="protein sequence ID" value="BAG88838.1"/>
    <property type="molecule type" value="mRNA"/>
</dbReference>
<dbReference type="RefSeq" id="XP_015615851.1">
    <property type="nucleotide sequence ID" value="XM_015760365.1"/>
</dbReference>
<dbReference type="FunCoup" id="Q2RB28">
    <property type="interactions" value="1778"/>
</dbReference>
<dbReference type="STRING" id="39947.Q2RB28"/>
<dbReference type="PaxDb" id="39947-Q2RB28"/>
<dbReference type="EnsemblPlants" id="Os11t0128300-01">
    <property type="protein sequence ID" value="Os11t0128300-01"/>
    <property type="gene ID" value="Os11g0128300"/>
</dbReference>
<dbReference type="Gramene" id="Os11t0128300-01">
    <property type="protein sequence ID" value="Os11t0128300-01"/>
    <property type="gene ID" value="Os11g0128300"/>
</dbReference>
<dbReference type="KEGG" id="dosa:Os11g0128300"/>
<dbReference type="eggNOG" id="ENOG502S2AW">
    <property type="taxonomic scope" value="Eukaryota"/>
</dbReference>
<dbReference type="HOGENOM" id="CLU_123565_2_0_1"/>
<dbReference type="InParanoid" id="Q2RB28"/>
<dbReference type="OMA" id="QAPRRCE"/>
<dbReference type="OrthoDB" id="682018at2759"/>
<dbReference type="Proteomes" id="UP000000763">
    <property type="component" value="Chromosome 11"/>
</dbReference>
<dbReference type="Proteomes" id="UP000007752">
    <property type="component" value="Chromosome 11"/>
</dbReference>
<dbReference type="Proteomes" id="UP000059680">
    <property type="component" value="Chromosome 11"/>
</dbReference>
<dbReference type="GO" id="GO:0005737">
    <property type="term" value="C:cytoplasm"/>
    <property type="evidence" value="ECO:0007669"/>
    <property type="project" value="UniProtKB-SubCell"/>
</dbReference>
<dbReference type="GO" id="GO:0005634">
    <property type="term" value="C:nucleus"/>
    <property type="evidence" value="ECO:0000318"/>
    <property type="project" value="GO_Central"/>
</dbReference>
<dbReference type="GO" id="GO:0003700">
    <property type="term" value="F:DNA-binding transcription factor activity"/>
    <property type="evidence" value="ECO:0000318"/>
    <property type="project" value="GO_Central"/>
</dbReference>
<dbReference type="GO" id="GO:0000976">
    <property type="term" value="F:transcription cis-regulatory region binding"/>
    <property type="evidence" value="ECO:0000318"/>
    <property type="project" value="GO_Central"/>
</dbReference>
<dbReference type="GO" id="GO:0008270">
    <property type="term" value="F:zinc ion binding"/>
    <property type="evidence" value="ECO:0007669"/>
    <property type="project" value="UniProtKB-KW"/>
</dbReference>
<dbReference type="GO" id="GO:0006355">
    <property type="term" value="P:regulation of DNA-templated transcription"/>
    <property type="evidence" value="ECO:0000318"/>
    <property type="project" value="GO_Central"/>
</dbReference>
<dbReference type="InterPro" id="IPR006456">
    <property type="entry name" value="ZF_HD_homeobox_Cys/His_dimer"/>
</dbReference>
<dbReference type="NCBIfam" id="TIGR01566">
    <property type="entry name" value="ZF_HD_prot_N"/>
    <property type="match status" value="1"/>
</dbReference>
<dbReference type="PANTHER" id="PTHR31948:SF162">
    <property type="entry name" value="MINI ZINC FINGER PROTEIN 2"/>
    <property type="match status" value="1"/>
</dbReference>
<dbReference type="PANTHER" id="PTHR31948">
    <property type="entry name" value="ZINC-FINGER HOMEODOMAIN PROTEIN 2"/>
    <property type="match status" value="1"/>
</dbReference>
<dbReference type="Pfam" id="PF04770">
    <property type="entry name" value="ZF-HD_dimer"/>
    <property type="match status" value="1"/>
</dbReference>
<dbReference type="PROSITE" id="PS51523">
    <property type="entry name" value="ZF_HD_DIMER"/>
    <property type="match status" value="1"/>
</dbReference>
<protein>
    <recommendedName>
        <fullName>Mini zinc finger protein 1</fullName>
        <shortName>OsMIF1</shortName>
    </recommendedName>
</protein>
<comment type="function">
    <text evidence="1">Inhibits zinc finger homeodomain (ZHD) transcription factors, by interacting with them to prevent both their nuclear localization and their DNA-binding properties.</text>
</comment>
<comment type="subunit">
    <text evidence="1">Homo- and heterodimers.</text>
</comment>
<comment type="subcellular location">
    <subcellularLocation>
        <location evidence="1">Cytoplasm</location>
    </subcellularLocation>
</comment>
<reference key="1">
    <citation type="journal article" date="2005" name="BMC Biol.">
        <title>The sequence of rice chromosomes 11 and 12, rich in disease resistance genes and recent gene duplications.</title>
        <authorList>
            <consortium name="The rice chromosomes 11 and 12 sequencing consortia"/>
        </authorList>
    </citation>
    <scope>NUCLEOTIDE SEQUENCE [LARGE SCALE GENOMIC DNA]</scope>
    <source>
        <strain>cv. Nipponbare</strain>
    </source>
</reference>
<reference key="2">
    <citation type="journal article" date="2005" name="Nature">
        <title>The map-based sequence of the rice genome.</title>
        <authorList>
            <consortium name="International rice genome sequencing project (IRGSP)"/>
        </authorList>
    </citation>
    <scope>NUCLEOTIDE SEQUENCE [LARGE SCALE GENOMIC DNA]</scope>
    <source>
        <strain>cv. Nipponbare</strain>
    </source>
</reference>
<reference key="3">
    <citation type="journal article" date="2008" name="Nucleic Acids Res.">
        <title>The rice annotation project database (RAP-DB): 2008 update.</title>
        <authorList>
            <consortium name="The rice annotation project (RAP)"/>
        </authorList>
    </citation>
    <scope>GENOME REANNOTATION</scope>
    <source>
        <strain>cv. Nipponbare</strain>
    </source>
</reference>
<reference key="4">
    <citation type="journal article" date="2013" name="Rice">
        <title>Improvement of the Oryza sativa Nipponbare reference genome using next generation sequence and optical map data.</title>
        <authorList>
            <person name="Kawahara Y."/>
            <person name="de la Bastide M."/>
            <person name="Hamilton J.P."/>
            <person name="Kanamori H."/>
            <person name="McCombie W.R."/>
            <person name="Ouyang S."/>
            <person name="Schwartz D.C."/>
            <person name="Tanaka T."/>
            <person name="Wu J."/>
            <person name="Zhou S."/>
            <person name="Childs K.L."/>
            <person name="Davidson R.M."/>
            <person name="Lin H."/>
            <person name="Quesada-Ocampo L."/>
            <person name="Vaillancourt B."/>
            <person name="Sakai H."/>
            <person name="Lee S.S."/>
            <person name="Kim J."/>
            <person name="Numa H."/>
            <person name="Itoh T."/>
            <person name="Buell C.R."/>
            <person name="Matsumoto T."/>
        </authorList>
    </citation>
    <scope>GENOME REANNOTATION</scope>
    <source>
        <strain>cv. Nipponbare</strain>
    </source>
</reference>
<reference key="5">
    <citation type="journal article" date="2005" name="PLoS Biol.">
        <title>The genomes of Oryza sativa: a history of duplications.</title>
        <authorList>
            <person name="Yu J."/>
            <person name="Wang J."/>
            <person name="Lin W."/>
            <person name="Li S."/>
            <person name="Li H."/>
            <person name="Zhou J."/>
            <person name="Ni P."/>
            <person name="Dong W."/>
            <person name="Hu S."/>
            <person name="Zeng C."/>
            <person name="Zhang J."/>
            <person name="Zhang Y."/>
            <person name="Li R."/>
            <person name="Xu Z."/>
            <person name="Li S."/>
            <person name="Li X."/>
            <person name="Zheng H."/>
            <person name="Cong L."/>
            <person name="Lin L."/>
            <person name="Yin J."/>
            <person name="Geng J."/>
            <person name="Li G."/>
            <person name="Shi J."/>
            <person name="Liu J."/>
            <person name="Lv H."/>
            <person name="Li J."/>
            <person name="Wang J."/>
            <person name="Deng Y."/>
            <person name="Ran L."/>
            <person name="Shi X."/>
            <person name="Wang X."/>
            <person name="Wu Q."/>
            <person name="Li C."/>
            <person name="Ren X."/>
            <person name="Wang J."/>
            <person name="Wang X."/>
            <person name="Li D."/>
            <person name="Liu D."/>
            <person name="Zhang X."/>
            <person name="Ji Z."/>
            <person name="Zhao W."/>
            <person name="Sun Y."/>
            <person name="Zhang Z."/>
            <person name="Bao J."/>
            <person name="Han Y."/>
            <person name="Dong L."/>
            <person name="Ji J."/>
            <person name="Chen P."/>
            <person name="Wu S."/>
            <person name="Liu J."/>
            <person name="Xiao Y."/>
            <person name="Bu D."/>
            <person name="Tan J."/>
            <person name="Yang L."/>
            <person name="Ye C."/>
            <person name="Zhang J."/>
            <person name="Xu J."/>
            <person name="Zhou Y."/>
            <person name="Yu Y."/>
            <person name="Zhang B."/>
            <person name="Zhuang S."/>
            <person name="Wei H."/>
            <person name="Liu B."/>
            <person name="Lei M."/>
            <person name="Yu H."/>
            <person name="Li Y."/>
            <person name="Xu H."/>
            <person name="Wei S."/>
            <person name="He X."/>
            <person name="Fang L."/>
            <person name="Zhang Z."/>
            <person name="Zhang Y."/>
            <person name="Huang X."/>
            <person name="Su Z."/>
            <person name="Tong W."/>
            <person name="Li J."/>
            <person name="Tong Z."/>
            <person name="Li S."/>
            <person name="Ye J."/>
            <person name="Wang L."/>
            <person name="Fang L."/>
            <person name="Lei T."/>
            <person name="Chen C.-S."/>
            <person name="Chen H.-C."/>
            <person name="Xu Z."/>
            <person name="Li H."/>
            <person name="Huang H."/>
            <person name="Zhang F."/>
            <person name="Xu H."/>
            <person name="Li N."/>
            <person name="Zhao C."/>
            <person name="Li S."/>
            <person name="Dong L."/>
            <person name="Huang Y."/>
            <person name="Li L."/>
            <person name="Xi Y."/>
            <person name="Qi Q."/>
            <person name="Li W."/>
            <person name="Zhang B."/>
            <person name="Hu W."/>
            <person name="Zhang Y."/>
            <person name="Tian X."/>
            <person name="Jiao Y."/>
            <person name="Liang X."/>
            <person name="Jin J."/>
            <person name="Gao L."/>
            <person name="Zheng W."/>
            <person name="Hao B."/>
            <person name="Liu S.-M."/>
            <person name="Wang W."/>
            <person name="Yuan L."/>
            <person name="Cao M."/>
            <person name="McDermott J."/>
            <person name="Samudrala R."/>
            <person name="Wang J."/>
            <person name="Wong G.K.-S."/>
            <person name="Yang H."/>
        </authorList>
    </citation>
    <scope>NUCLEOTIDE SEQUENCE [LARGE SCALE GENOMIC DNA]</scope>
    <source>
        <strain>cv. Nipponbare</strain>
    </source>
</reference>
<reference key="6">
    <citation type="journal article" date="2003" name="Science">
        <title>Collection, mapping, and annotation of over 28,000 cDNA clones from japonica rice.</title>
        <authorList>
            <consortium name="The rice full-length cDNA consortium"/>
        </authorList>
    </citation>
    <scope>NUCLEOTIDE SEQUENCE [LARGE SCALE MRNA]</scope>
    <source>
        <strain>cv. Nipponbare</strain>
    </source>
</reference>
<reference key="7">
    <citation type="journal article" date="2008" name="J. Integr. Plant Biol.">
        <title>Phylogenetic analysis of the plant-specific zinc finger-homeobox and mini zinc finger gene families.</title>
        <authorList>
            <person name="Hu W."/>
            <person name="dePamphilis C.W."/>
            <person name="Ma H."/>
        </authorList>
    </citation>
    <scope>GENE FAMILY</scope>
    <scope>NOMENCLATURE</scope>
</reference>
<evidence type="ECO:0000250" key="1"/>
<evidence type="ECO:0000255" key="2">
    <source>
        <dbReference type="PROSITE-ProRule" id="PRU00856"/>
    </source>
</evidence>
<evidence type="ECO:0000256" key="3">
    <source>
        <dbReference type="SAM" id="MobiDB-lite"/>
    </source>
</evidence>
<gene>
    <name type="primary">MIF1</name>
    <name type="ordered locus">Os11g0128300</name>
    <name type="ordered locus">LOC_Os11g03420</name>
    <name type="ORF">OsJ_32792</name>
</gene>
<name>MIF1_ORYSJ</name>
<feature type="chain" id="PRO_0000426028" description="Mini zinc finger protein 1">
    <location>
        <begin position="1"/>
        <end position="105"/>
    </location>
</feature>
<feature type="zinc finger region" description="ZF-HD dimerization-type; degenerate" evidence="2">
    <location>
        <begin position="35"/>
        <end position="84"/>
    </location>
</feature>
<feature type="region of interest" description="Disordered" evidence="3">
    <location>
        <begin position="1"/>
        <end position="29"/>
    </location>
</feature>
<organism>
    <name type="scientific">Oryza sativa subsp. japonica</name>
    <name type="common">Rice</name>
    <dbReference type="NCBI Taxonomy" id="39947"/>
    <lineage>
        <taxon>Eukaryota</taxon>
        <taxon>Viridiplantae</taxon>
        <taxon>Streptophyta</taxon>
        <taxon>Embryophyta</taxon>
        <taxon>Tracheophyta</taxon>
        <taxon>Spermatophyta</taxon>
        <taxon>Magnoliopsida</taxon>
        <taxon>Liliopsida</taxon>
        <taxon>Poales</taxon>
        <taxon>Poaceae</taxon>
        <taxon>BOP clade</taxon>
        <taxon>Oryzoideae</taxon>
        <taxon>Oryzeae</taxon>
        <taxon>Oryzinae</taxon>
        <taxon>Oryza</taxon>
        <taxon>Oryza sativa</taxon>
    </lineage>
</organism>
<accession>Q2RB28</accession>
<accession>A0A0P0XY93</accession>